<sequence length="525" mass="58130">MATPTQEAIDTFMTITGSSNAVAVRKLEEYRGNLNRAVNAYFTHGDQNSYDAMDIDDGVTPVLSEARTTDPFPLRDPNFGRSLFDNDPVMSRPPFVSHPREAREIPIEVKDSNGPSGQSNDAPTIEDVTETAQAHGPAAQEAVIIDEVSDDDNQSAPTGQSRHAVPVGSAENNMQHYNDIEEQIIRAAIEASKMETGDDVTKSVTVQSAEREVLRSEGWKASSSEREASEMVSIPVQQGSRASNGRFAAPSSLSEDDDDDDDDDPDYVEEEEEPLVSHRPRRAVSGSRSSLNDDLPRSPEAEDATIHSPGAGNGFPSEWGGISSEEHDEAIMLEAAMFGGISESEYGVPYAHYPQRTQRPPSPSLTAQRLIREQQDDEYLASLEADRVKAEARRLEEEAARVEAIEEAKRKEEEARRKVEEEQELERQLVSKEASLPQEPPAGEENAITLQVRLPDGTRHGRRFFKSDKLQSLFDFIDICRVVKPNTYRLVRPYPRRAFGDGECSSTLNDIGLTSKQEALFLELI</sequence>
<reference key="1">
    <citation type="journal article" date="1999" name="Nature">
        <title>Sequence and analysis of chromosome 4 of the plant Arabidopsis thaliana.</title>
        <authorList>
            <person name="Mayer K.F.X."/>
            <person name="Schueller C."/>
            <person name="Wambutt R."/>
            <person name="Murphy G."/>
            <person name="Volckaert G."/>
            <person name="Pohl T."/>
            <person name="Duesterhoeft A."/>
            <person name="Stiekema W."/>
            <person name="Entian K.-D."/>
            <person name="Terryn N."/>
            <person name="Harris B."/>
            <person name="Ansorge W."/>
            <person name="Brandt P."/>
            <person name="Grivell L.A."/>
            <person name="Rieger M."/>
            <person name="Weichselgartner M."/>
            <person name="de Simone V."/>
            <person name="Obermaier B."/>
            <person name="Mache R."/>
            <person name="Mueller M."/>
            <person name="Kreis M."/>
            <person name="Delseny M."/>
            <person name="Puigdomenech P."/>
            <person name="Watson M."/>
            <person name="Schmidtheini T."/>
            <person name="Reichert B."/>
            <person name="Portetelle D."/>
            <person name="Perez-Alonso M."/>
            <person name="Boutry M."/>
            <person name="Bancroft I."/>
            <person name="Vos P."/>
            <person name="Hoheisel J."/>
            <person name="Zimmermann W."/>
            <person name="Wedler H."/>
            <person name="Ridley P."/>
            <person name="Langham S.-A."/>
            <person name="McCullagh B."/>
            <person name="Bilham L."/>
            <person name="Robben J."/>
            <person name="van der Schueren J."/>
            <person name="Grymonprez B."/>
            <person name="Chuang Y.-J."/>
            <person name="Vandenbussche F."/>
            <person name="Braeken M."/>
            <person name="Weltjens I."/>
            <person name="Voet M."/>
            <person name="Bastiaens I."/>
            <person name="Aert R."/>
            <person name="Defoor E."/>
            <person name="Weitzenegger T."/>
            <person name="Bothe G."/>
            <person name="Ramsperger U."/>
            <person name="Hilbert H."/>
            <person name="Braun M."/>
            <person name="Holzer E."/>
            <person name="Brandt A."/>
            <person name="Peters S."/>
            <person name="van Staveren M."/>
            <person name="Dirkse W."/>
            <person name="Mooijman P."/>
            <person name="Klein Lankhorst R."/>
            <person name="Rose M."/>
            <person name="Hauf J."/>
            <person name="Koetter P."/>
            <person name="Berneiser S."/>
            <person name="Hempel S."/>
            <person name="Feldpausch M."/>
            <person name="Lamberth S."/>
            <person name="Van den Daele H."/>
            <person name="De Keyser A."/>
            <person name="Buysshaert C."/>
            <person name="Gielen J."/>
            <person name="Villarroel R."/>
            <person name="De Clercq R."/>
            <person name="van Montagu M."/>
            <person name="Rogers J."/>
            <person name="Cronin A."/>
            <person name="Quail M.A."/>
            <person name="Bray-Allen S."/>
            <person name="Clark L."/>
            <person name="Doggett J."/>
            <person name="Hall S."/>
            <person name="Kay M."/>
            <person name="Lennard N."/>
            <person name="McLay K."/>
            <person name="Mayes R."/>
            <person name="Pettett A."/>
            <person name="Rajandream M.A."/>
            <person name="Lyne M."/>
            <person name="Benes V."/>
            <person name="Rechmann S."/>
            <person name="Borkova D."/>
            <person name="Bloecker H."/>
            <person name="Scharfe M."/>
            <person name="Grimm M."/>
            <person name="Loehnert T.-H."/>
            <person name="Dose S."/>
            <person name="de Haan M."/>
            <person name="Maarse A.C."/>
            <person name="Schaefer M."/>
            <person name="Mueller-Auer S."/>
            <person name="Gabel C."/>
            <person name="Fuchs M."/>
            <person name="Fartmann B."/>
            <person name="Granderath K."/>
            <person name="Dauner D."/>
            <person name="Herzl A."/>
            <person name="Neumann S."/>
            <person name="Argiriou A."/>
            <person name="Vitale D."/>
            <person name="Liguori R."/>
            <person name="Piravandi E."/>
            <person name="Massenet O."/>
            <person name="Quigley F."/>
            <person name="Clabauld G."/>
            <person name="Muendlein A."/>
            <person name="Felber R."/>
            <person name="Schnabl S."/>
            <person name="Hiller R."/>
            <person name="Schmidt W."/>
            <person name="Lecharny A."/>
            <person name="Aubourg S."/>
            <person name="Chefdor F."/>
            <person name="Cooke R."/>
            <person name="Berger C."/>
            <person name="Monfort A."/>
            <person name="Casacuberta E."/>
            <person name="Gibbons T."/>
            <person name="Weber N."/>
            <person name="Vandenbol M."/>
            <person name="Bargues M."/>
            <person name="Terol J."/>
            <person name="Torres A."/>
            <person name="Perez-Perez A."/>
            <person name="Purnelle B."/>
            <person name="Bent E."/>
            <person name="Johnson S."/>
            <person name="Tacon D."/>
            <person name="Jesse T."/>
            <person name="Heijnen L."/>
            <person name="Schwarz S."/>
            <person name="Scholler P."/>
            <person name="Heber S."/>
            <person name="Francs P."/>
            <person name="Bielke C."/>
            <person name="Frishman D."/>
            <person name="Haase D."/>
            <person name="Lemcke K."/>
            <person name="Mewes H.-W."/>
            <person name="Stocker S."/>
            <person name="Zaccaria P."/>
            <person name="Bevan M."/>
            <person name="Wilson R.K."/>
            <person name="de la Bastide M."/>
            <person name="Habermann K."/>
            <person name="Parnell L."/>
            <person name="Dedhia N."/>
            <person name="Gnoj L."/>
            <person name="Schutz K."/>
            <person name="Huang E."/>
            <person name="Spiegel L."/>
            <person name="Sekhon M."/>
            <person name="Murray J."/>
            <person name="Sheet P."/>
            <person name="Cordes M."/>
            <person name="Abu-Threideh J."/>
            <person name="Stoneking T."/>
            <person name="Kalicki J."/>
            <person name="Graves T."/>
            <person name="Harmon G."/>
            <person name="Edwards J."/>
            <person name="Latreille P."/>
            <person name="Courtney L."/>
            <person name="Cloud J."/>
            <person name="Abbott A."/>
            <person name="Scott K."/>
            <person name="Johnson D."/>
            <person name="Minx P."/>
            <person name="Bentley D."/>
            <person name="Fulton B."/>
            <person name="Miller N."/>
            <person name="Greco T."/>
            <person name="Kemp K."/>
            <person name="Kramer J."/>
            <person name="Fulton L."/>
            <person name="Mardis E."/>
            <person name="Dante M."/>
            <person name="Pepin K."/>
            <person name="Hillier L.W."/>
            <person name="Nelson J."/>
            <person name="Spieth J."/>
            <person name="Ryan E."/>
            <person name="Andrews S."/>
            <person name="Geisel C."/>
            <person name="Layman D."/>
            <person name="Du H."/>
            <person name="Ali J."/>
            <person name="Berghoff A."/>
            <person name="Jones K."/>
            <person name="Drone K."/>
            <person name="Cotton M."/>
            <person name="Joshu C."/>
            <person name="Antonoiu B."/>
            <person name="Zidanic M."/>
            <person name="Strong C."/>
            <person name="Sun H."/>
            <person name="Lamar B."/>
            <person name="Yordan C."/>
            <person name="Ma P."/>
            <person name="Zhong J."/>
            <person name="Preston R."/>
            <person name="Vil D."/>
            <person name="Shekher M."/>
            <person name="Matero A."/>
            <person name="Shah R."/>
            <person name="Swaby I.K."/>
            <person name="O'Shaughnessy A."/>
            <person name="Rodriguez M."/>
            <person name="Hoffman J."/>
            <person name="Till S."/>
            <person name="Granat S."/>
            <person name="Shohdy N."/>
            <person name="Hasegawa A."/>
            <person name="Hameed A."/>
            <person name="Lodhi M."/>
            <person name="Johnson A."/>
            <person name="Chen E."/>
            <person name="Marra M.A."/>
            <person name="Martienssen R."/>
            <person name="McCombie W.R."/>
        </authorList>
    </citation>
    <scope>NUCLEOTIDE SEQUENCE [LARGE SCALE GENOMIC DNA]</scope>
    <source>
        <strain>cv. Columbia</strain>
    </source>
</reference>
<reference key="2">
    <citation type="journal article" date="2017" name="Plant J.">
        <title>Araport11: a complete reannotation of the Arabidopsis thaliana reference genome.</title>
        <authorList>
            <person name="Cheng C.Y."/>
            <person name="Krishnakumar V."/>
            <person name="Chan A.P."/>
            <person name="Thibaud-Nissen F."/>
            <person name="Schobel S."/>
            <person name="Town C.D."/>
        </authorList>
    </citation>
    <scope>GENOME REANNOTATION</scope>
    <source>
        <strain>cv. Columbia</strain>
    </source>
</reference>
<reference key="3">
    <citation type="journal article" date="2003" name="Science">
        <title>Empirical analysis of transcriptional activity in the Arabidopsis genome.</title>
        <authorList>
            <person name="Yamada K."/>
            <person name="Lim J."/>
            <person name="Dale J.M."/>
            <person name="Chen H."/>
            <person name="Shinn P."/>
            <person name="Palm C.J."/>
            <person name="Southwick A.M."/>
            <person name="Wu H.C."/>
            <person name="Kim C.J."/>
            <person name="Nguyen M."/>
            <person name="Pham P.K."/>
            <person name="Cheuk R.F."/>
            <person name="Karlin-Newmann G."/>
            <person name="Liu S.X."/>
            <person name="Lam B."/>
            <person name="Sakano H."/>
            <person name="Wu T."/>
            <person name="Yu G."/>
            <person name="Miranda M."/>
            <person name="Quach H.L."/>
            <person name="Tripp M."/>
            <person name="Chang C.H."/>
            <person name="Lee J.M."/>
            <person name="Toriumi M.J."/>
            <person name="Chan M.M."/>
            <person name="Tang C.C."/>
            <person name="Onodera C.S."/>
            <person name="Deng J.M."/>
            <person name="Akiyama K."/>
            <person name="Ansari Y."/>
            <person name="Arakawa T."/>
            <person name="Banh J."/>
            <person name="Banno F."/>
            <person name="Bowser L."/>
            <person name="Brooks S.Y."/>
            <person name="Carninci P."/>
            <person name="Chao Q."/>
            <person name="Choy N."/>
            <person name="Enju A."/>
            <person name="Goldsmith A.D."/>
            <person name="Gurjal M."/>
            <person name="Hansen N.F."/>
            <person name="Hayashizaki Y."/>
            <person name="Johnson-Hopson C."/>
            <person name="Hsuan V.W."/>
            <person name="Iida K."/>
            <person name="Karnes M."/>
            <person name="Khan S."/>
            <person name="Koesema E."/>
            <person name="Ishida J."/>
            <person name="Jiang P.X."/>
            <person name="Jones T."/>
            <person name="Kawai J."/>
            <person name="Kamiya A."/>
            <person name="Meyers C."/>
            <person name="Nakajima M."/>
            <person name="Narusaka M."/>
            <person name="Seki M."/>
            <person name="Sakurai T."/>
            <person name="Satou M."/>
            <person name="Tamse R."/>
            <person name="Vaysberg M."/>
            <person name="Wallender E.K."/>
            <person name="Wong C."/>
            <person name="Yamamura Y."/>
            <person name="Yuan S."/>
            <person name="Shinozaki K."/>
            <person name="Davis R.W."/>
            <person name="Theologis A."/>
            <person name="Ecker J.R."/>
        </authorList>
    </citation>
    <scope>NUCLEOTIDE SEQUENCE [LARGE SCALE MRNA]</scope>
    <source>
        <strain>cv. Columbia</strain>
    </source>
</reference>
<reference key="4">
    <citation type="book" date="2005" name="Proceedings of the 16th international conference on Arabidopsis research">
        <title>The plant UBX-domain containing (PUX) protein family regulates the function of Arabidopsis CDC48, a conserved essential AAA-ATPase.</title>
        <authorList>
            <person name="Posthuma R."/>
            <person name="Rancour D."/>
            <person name="Park S."/>
            <person name="Bates B."/>
            <person name="Bednarek S."/>
        </authorList>
    </citation>
    <scope>GENE FAMILY</scope>
</reference>
<reference key="5">
    <citation type="journal article" date="2008" name="J. Proteome Res.">
        <title>Site-specific phosphorylation profiling of Arabidopsis proteins by mass spectrometry and peptide chip analysis.</title>
        <authorList>
            <person name="de la Fuente van Bentem S."/>
            <person name="Anrather D."/>
            <person name="Dohnal I."/>
            <person name="Roitinger E."/>
            <person name="Csaszar E."/>
            <person name="Joore J."/>
            <person name="Buijnink J."/>
            <person name="Carreri A."/>
            <person name="Forzani C."/>
            <person name="Lorkovic Z.J."/>
            <person name="Barta A."/>
            <person name="Lecourieux D."/>
            <person name="Verhounig A."/>
            <person name="Jonak C."/>
            <person name="Hirt H."/>
        </authorList>
    </citation>
    <scope>PHOSPHORYLATION [LARGE SCALE ANALYSIS] AT SER-362</scope>
    <scope>IDENTIFICATION BY MASS SPECTROMETRY [LARGE SCALE ANALYSIS]</scope>
    <source>
        <tissue>Root</tissue>
    </source>
</reference>
<reference key="6">
    <citation type="journal article" date="2009" name="J. Proteomics">
        <title>Phosphoproteomic analysis of nuclei-enriched fractions from Arabidopsis thaliana.</title>
        <authorList>
            <person name="Jones A.M.E."/>
            <person name="MacLean D."/>
            <person name="Studholme D.J."/>
            <person name="Serna-Sanz A."/>
            <person name="Andreasson E."/>
            <person name="Rathjen J.P."/>
            <person name="Peck S.C."/>
        </authorList>
    </citation>
    <scope>IDENTIFICATION BY MASS SPECTROMETRY [LARGE SCALE ANALYSIS]</scope>
    <source>
        <strain>cv. Columbia</strain>
    </source>
</reference>
<reference key="7">
    <citation type="journal article" date="2009" name="Plant Physiol.">
        <title>Large-scale Arabidopsis phosphoproteome profiling reveals novel chloroplast kinase substrates and phosphorylation networks.</title>
        <authorList>
            <person name="Reiland S."/>
            <person name="Messerli G."/>
            <person name="Baerenfaller K."/>
            <person name="Gerrits B."/>
            <person name="Endler A."/>
            <person name="Grossmann J."/>
            <person name="Gruissem W."/>
            <person name="Baginsky S."/>
        </authorList>
    </citation>
    <scope>PHOSPHORYLATION [LARGE SCALE ANALYSIS] AT SER-362</scope>
    <scope>IDENTIFICATION BY MASS SPECTROMETRY [LARGE SCALE ANALYSIS]</scope>
</reference>
<proteinExistence type="evidence at protein level"/>
<dbReference type="EMBL" id="AL031018">
    <property type="protein sequence ID" value="CAA19820.1"/>
    <property type="status" value="ALT_SEQ"/>
    <property type="molecule type" value="Genomic_DNA"/>
</dbReference>
<dbReference type="EMBL" id="AL161558">
    <property type="protein sequence ID" value="CAB79259.1"/>
    <property type="status" value="ALT_SEQ"/>
    <property type="molecule type" value="Genomic_DNA"/>
</dbReference>
<dbReference type="EMBL" id="CP002687">
    <property type="protein sequence ID" value="AEE84698.1"/>
    <property type="molecule type" value="Genomic_DNA"/>
</dbReference>
<dbReference type="EMBL" id="AF360264">
    <property type="protein sequence ID" value="AAK25974.1"/>
    <property type="molecule type" value="mRNA"/>
</dbReference>
<dbReference type="EMBL" id="AY142615">
    <property type="protein sequence ID" value="AAN13184.1"/>
    <property type="molecule type" value="mRNA"/>
</dbReference>
<dbReference type="PIR" id="T05136">
    <property type="entry name" value="T05136"/>
</dbReference>
<dbReference type="RefSeq" id="NP_567675.1">
    <property type="nucleotide sequence ID" value="NM_118433.4"/>
</dbReference>
<dbReference type="SMR" id="Q9C5G7"/>
<dbReference type="FunCoup" id="Q9C5G7">
    <property type="interactions" value="260"/>
</dbReference>
<dbReference type="STRING" id="3702.Q9C5G7"/>
<dbReference type="TCDB" id="3.A.16.1.5">
    <property type="family name" value="the endoplasmic reticular retrotranslocon (er-rt) family"/>
</dbReference>
<dbReference type="iPTMnet" id="Q9C5G7"/>
<dbReference type="PaxDb" id="3702-AT4G23040.1"/>
<dbReference type="ProteomicsDB" id="224793"/>
<dbReference type="EnsemblPlants" id="AT4G23040.1">
    <property type="protein sequence ID" value="AT4G23040.1"/>
    <property type="gene ID" value="AT4G23040"/>
</dbReference>
<dbReference type="GeneID" id="828403"/>
<dbReference type="Gramene" id="AT4G23040.1">
    <property type="protein sequence ID" value="AT4G23040.1"/>
    <property type="gene ID" value="AT4G23040"/>
</dbReference>
<dbReference type="KEGG" id="ath:AT4G23040"/>
<dbReference type="Araport" id="AT4G23040"/>
<dbReference type="TAIR" id="AT4G23040"/>
<dbReference type="eggNOG" id="KOG1363">
    <property type="taxonomic scope" value="Eukaryota"/>
</dbReference>
<dbReference type="HOGENOM" id="CLU_035367_0_0_1"/>
<dbReference type="InParanoid" id="Q9C5G7"/>
<dbReference type="OMA" id="NAYFTHG"/>
<dbReference type="OrthoDB" id="1920064at2759"/>
<dbReference type="PhylomeDB" id="Q9C5G7"/>
<dbReference type="PRO" id="PR:Q9C5G7"/>
<dbReference type="Proteomes" id="UP000006548">
    <property type="component" value="Chromosome 4"/>
</dbReference>
<dbReference type="ExpressionAtlas" id="Q9C5G7">
    <property type="expression patterns" value="baseline and differential"/>
</dbReference>
<dbReference type="CDD" id="cd14351">
    <property type="entry name" value="UBA_Ubx1_like"/>
    <property type="match status" value="1"/>
</dbReference>
<dbReference type="CDD" id="cd01767">
    <property type="entry name" value="UBX"/>
    <property type="match status" value="1"/>
</dbReference>
<dbReference type="FunFam" id="1.10.8.10:FF:000096">
    <property type="entry name" value="UBX domain-containing protein"/>
    <property type="match status" value="1"/>
</dbReference>
<dbReference type="Gene3D" id="1.10.8.10">
    <property type="entry name" value="DNA helicase RuvA subunit, C-terminal domain"/>
    <property type="match status" value="1"/>
</dbReference>
<dbReference type="Gene3D" id="3.10.20.90">
    <property type="entry name" value="Phosphatidylinositol 3-kinase Catalytic Subunit, Chain A, domain 1"/>
    <property type="match status" value="1"/>
</dbReference>
<dbReference type="InterPro" id="IPR009060">
    <property type="entry name" value="UBA-like_sf"/>
</dbReference>
<dbReference type="InterPro" id="IPR029071">
    <property type="entry name" value="Ubiquitin-like_domsf"/>
</dbReference>
<dbReference type="InterPro" id="IPR001012">
    <property type="entry name" value="UBX_dom"/>
</dbReference>
<dbReference type="InterPro" id="IPR050730">
    <property type="entry name" value="UBX_domain-protein"/>
</dbReference>
<dbReference type="PANTHER" id="PTHR23322">
    <property type="entry name" value="FAS-ASSOCIATED PROTEIN"/>
    <property type="match status" value="1"/>
</dbReference>
<dbReference type="PANTHER" id="PTHR23322:SF93">
    <property type="entry name" value="UBX DOMAIN-CONTAINING PROTEIN 8"/>
    <property type="match status" value="1"/>
</dbReference>
<dbReference type="Pfam" id="PF14555">
    <property type="entry name" value="UBA_4"/>
    <property type="match status" value="1"/>
</dbReference>
<dbReference type="Pfam" id="PF00789">
    <property type="entry name" value="UBX"/>
    <property type="match status" value="1"/>
</dbReference>
<dbReference type="SMART" id="SM00166">
    <property type="entry name" value="UBX"/>
    <property type="match status" value="1"/>
</dbReference>
<dbReference type="SUPFAM" id="SSF46934">
    <property type="entry name" value="UBA-like"/>
    <property type="match status" value="1"/>
</dbReference>
<dbReference type="SUPFAM" id="SSF54236">
    <property type="entry name" value="Ubiquitin-like"/>
    <property type="match status" value="1"/>
</dbReference>
<dbReference type="PROSITE" id="PS50033">
    <property type="entry name" value="UBX"/>
    <property type="match status" value="1"/>
</dbReference>
<protein>
    <recommendedName>
        <fullName evidence="4">Plant UBX domain-containing protein 13</fullName>
        <shortName evidence="4">PUX13</shortName>
    </recommendedName>
</protein>
<organism>
    <name type="scientific">Arabidopsis thaliana</name>
    <name type="common">Mouse-ear cress</name>
    <dbReference type="NCBI Taxonomy" id="3702"/>
    <lineage>
        <taxon>Eukaryota</taxon>
        <taxon>Viridiplantae</taxon>
        <taxon>Streptophyta</taxon>
        <taxon>Embryophyta</taxon>
        <taxon>Tracheophyta</taxon>
        <taxon>Spermatophyta</taxon>
        <taxon>Magnoliopsida</taxon>
        <taxon>eudicotyledons</taxon>
        <taxon>Gunneridae</taxon>
        <taxon>Pentapetalae</taxon>
        <taxon>rosids</taxon>
        <taxon>malvids</taxon>
        <taxon>Brassicales</taxon>
        <taxon>Brassicaceae</taxon>
        <taxon>Camelineae</taxon>
        <taxon>Arabidopsis</taxon>
    </lineage>
</organism>
<gene>
    <name evidence="4" type="primary">PUX13</name>
    <name evidence="6" type="ordered locus">At4g23040</name>
    <name evidence="7" type="ORF">F7H19.230</name>
</gene>
<feature type="chain" id="PRO_0000432611" description="Plant UBX domain-containing protein 13">
    <location>
        <begin position="1"/>
        <end position="525"/>
    </location>
</feature>
<feature type="domain" description="UBA-like">
    <location>
        <begin position="2"/>
        <end position="44"/>
    </location>
</feature>
<feature type="domain" description="UBX" evidence="2">
    <location>
        <begin position="443"/>
        <end position="521"/>
    </location>
</feature>
<feature type="region of interest" description="Disordered" evidence="3">
    <location>
        <begin position="67"/>
        <end position="96"/>
    </location>
</feature>
<feature type="region of interest" description="Disordered" evidence="3">
    <location>
        <begin position="150"/>
        <end position="172"/>
    </location>
</feature>
<feature type="region of interest" description="Disordered" evidence="3">
    <location>
        <begin position="194"/>
        <end position="328"/>
    </location>
</feature>
<feature type="region of interest" description="Disordered" evidence="3">
    <location>
        <begin position="408"/>
        <end position="446"/>
    </location>
</feature>
<feature type="coiled-coil region" evidence="1">
    <location>
        <begin position="380"/>
        <end position="436"/>
    </location>
</feature>
<feature type="compositionally biased region" description="Basic and acidic residues" evidence="3">
    <location>
        <begin position="209"/>
        <end position="229"/>
    </location>
</feature>
<feature type="compositionally biased region" description="Acidic residues" evidence="3">
    <location>
        <begin position="254"/>
        <end position="274"/>
    </location>
</feature>
<feature type="compositionally biased region" description="Basic and acidic residues" evidence="3">
    <location>
        <begin position="408"/>
        <end position="430"/>
    </location>
</feature>
<feature type="modified residue" description="Phosphoserine" evidence="8 9">
    <location>
        <position position="362"/>
    </location>
</feature>
<evidence type="ECO:0000255" key="1"/>
<evidence type="ECO:0000255" key="2">
    <source>
        <dbReference type="PROSITE-ProRule" id="PRU00215"/>
    </source>
</evidence>
<evidence type="ECO:0000256" key="3">
    <source>
        <dbReference type="SAM" id="MobiDB-lite"/>
    </source>
</evidence>
<evidence type="ECO:0000303" key="4">
    <source ref="4"/>
</evidence>
<evidence type="ECO:0000305" key="5"/>
<evidence type="ECO:0000312" key="6">
    <source>
        <dbReference type="Araport" id="AT4G23040"/>
    </source>
</evidence>
<evidence type="ECO:0000312" key="7">
    <source>
        <dbReference type="EMBL" id="CAA19820.1"/>
    </source>
</evidence>
<evidence type="ECO:0007744" key="8">
    <source>
    </source>
</evidence>
<evidence type="ECO:0007744" key="9">
    <source>
    </source>
</evidence>
<accession>Q9C5G7</accession>
<accession>O82753</accession>
<comment type="sequence caution" evidence="5">
    <conflict type="erroneous gene model prediction">
        <sequence resource="EMBL-CDS" id="CAA19820"/>
    </conflict>
</comment>
<comment type="sequence caution" evidence="5">
    <conflict type="erroneous gene model prediction">
        <sequence resource="EMBL-CDS" id="CAB79259"/>
    </conflict>
</comment>
<keyword id="KW-0175">Coiled coil</keyword>
<keyword id="KW-0597">Phosphoprotein</keyword>
<keyword id="KW-1185">Reference proteome</keyword>
<keyword id="KW-0833">Ubl conjugation pathway</keyword>
<name>PUX13_ARATH</name>